<organism>
    <name type="scientific">Escherichia coli (strain ATCC 8739 / DSM 1576 / NBRC 3972 / NCIMB 8545 / WDCM 00012 / Crooks)</name>
    <dbReference type="NCBI Taxonomy" id="481805"/>
    <lineage>
        <taxon>Bacteria</taxon>
        <taxon>Pseudomonadati</taxon>
        <taxon>Pseudomonadota</taxon>
        <taxon>Gammaproteobacteria</taxon>
        <taxon>Enterobacterales</taxon>
        <taxon>Enterobacteriaceae</taxon>
        <taxon>Escherichia</taxon>
    </lineage>
</organism>
<feature type="chain" id="PRO_1000087385" description="Glutathione-regulated potassium-efflux system protein KefB">
    <location>
        <begin position="1"/>
        <end position="601"/>
    </location>
</feature>
<feature type="transmembrane region" description="Helical" evidence="1">
    <location>
        <begin position="4"/>
        <end position="24"/>
    </location>
</feature>
<feature type="transmembrane region" description="Helical" evidence="1">
    <location>
        <begin position="29"/>
        <end position="49"/>
    </location>
</feature>
<feature type="transmembrane region" description="Helical" evidence="1">
    <location>
        <begin position="55"/>
        <end position="75"/>
    </location>
</feature>
<feature type="transmembrane region" description="Helical" evidence="1">
    <location>
        <begin position="87"/>
        <end position="107"/>
    </location>
</feature>
<feature type="transmembrane region" description="Helical" evidence="1">
    <location>
        <begin position="115"/>
        <end position="135"/>
    </location>
</feature>
<feature type="transmembrane region" description="Helical" evidence="1">
    <location>
        <begin position="152"/>
        <end position="172"/>
    </location>
</feature>
<feature type="transmembrane region" description="Helical" evidence="1">
    <location>
        <begin position="177"/>
        <end position="197"/>
    </location>
</feature>
<feature type="transmembrane region" description="Helical" evidence="1">
    <location>
        <begin position="207"/>
        <end position="227"/>
    </location>
</feature>
<feature type="transmembrane region" description="Helical" evidence="1">
    <location>
        <begin position="230"/>
        <end position="250"/>
    </location>
</feature>
<feature type="transmembrane region" description="Helical" evidence="1">
    <location>
        <begin position="268"/>
        <end position="288"/>
    </location>
</feature>
<feature type="transmembrane region" description="Helical" evidence="1">
    <location>
        <begin position="291"/>
        <end position="311"/>
    </location>
</feature>
<feature type="transmembrane region" description="Helical" evidence="1">
    <location>
        <begin position="324"/>
        <end position="344"/>
    </location>
</feature>
<feature type="transmembrane region" description="Helical" evidence="1">
    <location>
        <begin position="356"/>
        <end position="376"/>
    </location>
</feature>
<feature type="domain" description="RCK N-terminal" evidence="2">
    <location>
        <begin position="400"/>
        <end position="519"/>
    </location>
</feature>
<evidence type="ECO:0000255" key="1">
    <source>
        <dbReference type="HAMAP-Rule" id="MF_01412"/>
    </source>
</evidence>
<evidence type="ECO:0000255" key="2">
    <source>
        <dbReference type="PROSITE-ProRule" id="PRU00543"/>
    </source>
</evidence>
<proteinExistence type="inferred from homology"/>
<accession>B1IPB4</accession>
<comment type="function">
    <text evidence="1">Pore-forming subunit of a potassium efflux system that confers protection against electrophiles. Catalyzes K(+)/H(+) antiport.</text>
</comment>
<comment type="subunit">
    <text evidence="1">Interacts with the regulatory subunit KefG.</text>
</comment>
<comment type="subcellular location">
    <subcellularLocation>
        <location evidence="1">Cell inner membrane</location>
        <topology evidence="1">Multi-pass membrane protein</topology>
    </subcellularLocation>
</comment>
<comment type="similarity">
    <text evidence="1">Belongs to the monovalent cation:proton antiporter 2 (CPA2) transporter (TC 2.A.37) family. KefB subfamily.</text>
</comment>
<sequence length="601" mass="66407">MEGSDFLLAGVLFLFAAVAAVPLASRLGIGAVLGYLLAGIAIGPWGLGFISDVDEILHFSELGVVFLMFIIGLELNPSKLWQLRRSIFGVGAAQVLLSAALLAGLLMLTDFAWQAAVVGGIGLAMSSTAMALQLMREKGMNRSESGQLGFSVLLFQDLAVIPALALVPLLAGSADEHFDWMKIGIKVLAFVGMLIGGRYLLRPVFRFIAASGVREVFTAATLLLVLGSALFMDALGLSMALGTFIAGVLLAESEYRHELETAIDPFKGLLLGLFFISVGMSLNLGVLYTHLLWVVISVVVLVAVKILVLYLLARLYGVRSSERMQFAGVLSQGGEFAFVLFSTASSQRLFQGDQMALLLVTVTLSMMTTPLLMKLVDKWLSRQFNGPEEEDEKPWVNDDKPQVIVVGFGRFGQVIGRLLMANKMRITVLERDISAVNLMRKYGYKVYYGDATQVDLLRSAGAEAAESIVITCNEPEDTMKLVEICQQHFPHLHILARARGRVEAHELLQAGVTQFSRETFSSALELGRKTLVTLGMHPHQAQRAQLHFRRLDMRMLRELIPMHADTVQISRAREARRELEEIFQREMQQERRQLDGWDEFE</sequence>
<gene>
    <name evidence="1" type="primary">kefB</name>
    <name type="ordered locus">EcolC_0362</name>
</gene>
<name>KEFB_ECOLC</name>
<dbReference type="EMBL" id="CP000946">
    <property type="protein sequence ID" value="ACA76040.1"/>
    <property type="molecule type" value="Genomic_DNA"/>
</dbReference>
<dbReference type="RefSeq" id="WP_000399101.1">
    <property type="nucleotide sequence ID" value="NC_010468.1"/>
</dbReference>
<dbReference type="SMR" id="B1IPB4"/>
<dbReference type="KEGG" id="ecl:EcolC_0362"/>
<dbReference type="HOGENOM" id="CLU_005126_9_3_6"/>
<dbReference type="GO" id="GO:0005886">
    <property type="term" value="C:plasma membrane"/>
    <property type="evidence" value="ECO:0007669"/>
    <property type="project" value="UniProtKB-SubCell"/>
</dbReference>
<dbReference type="GO" id="GO:0015503">
    <property type="term" value="F:glutathione-regulated potassium exporter activity"/>
    <property type="evidence" value="ECO:0007669"/>
    <property type="project" value="UniProtKB-UniRule"/>
</dbReference>
<dbReference type="GO" id="GO:1902600">
    <property type="term" value="P:proton transmembrane transport"/>
    <property type="evidence" value="ECO:0007669"/>
    <property type="project" value="InterPro"/>
</dbReference>
<dbReference type="FunFam" id="1.20.1530.20:FF:000001">
    <property type="entry name" value="Glutathione-regulated potassium-efflux system protein KefB"/>
    <property type="match status" value="1"/>
</dbReference>
<dbReference type="FunFam" id="3.40.50.720:FF:000036">
    <property type="entry name" value="Glutathione-regulated potassium-efflux system protein KefB"/>
    <property type="match status" value="1"/>
</dbReference>
<dbReference type="Gene3D" id="1.20.1530.20">
    <property type="match status" value="1"/>
</dbReference>
<dbReference type="Gene3D" id="3.40.50.720">
    <property type="entry name" value="NAD(P)-binding Rossmann-like Domain"/>
    <property type="match status" value="1"/>
</dbReference>
<dbReference type="HAMAP" id="MF_01412">
    <property type="entry name" value="K_H_efflux_KefB"/>
    <property type="match status" value="1"/>
</dbReference>
<dbReference type="InterPro" id="IPR006153">
    <property type="entry name" value="Cation/H_exchanger_TM"/>
</dbReference>
<dbReference type="InterPro" id="IPR004771">
    <property type="entry name" value="K/H_exchanger"/>
</dbReference>
<dbReference type="InterPro" id="IPR020884">
    <property type="entry name" value="K_H_efflux_KefB"/>
</dbReference>
<dbReference type="InterPro" id="IPR038770">
    <property type="entry name" value="Na+/solute_symporter_sf"/>
</dbReference>
<dbReference type="InterPro" id="IPR036291">
    <property type="entry name" value="NAD(P)-bd_dom_sf"/>
</dbReference>
<dbReference type="InterPro" id="IPR003148">
    <property type="entry name" value="RCK_N"/>
</dbReference>
<dbReference type="NCBIfam" id="TIGR00932">
    <property type="entry name" value="2a37"/>
    <property type="match status" value="1"/>
</dbReference>
<dbReference type="NCBIfam" id="NF002973">
    <property type="entry name" value="PRK03659.1"/>
    <property type="match status" value="1"/>
</dbReference>
<dbReference type="PANTHER" id="PTHR46157">
    <property type="entry name" value="K(+) EFFLUX ANTIPORTER 3, CHLOROPLASTIC"/>
    <property type="match status" value="1"/>
</dbReference>
<dbReference type="PANTHER" id="PTHR46157:SF4">
    <property type="entry name" value="K(+) EFFLUX ANTIPORTER 3, CHLOROPLASTIC"/>
    <property type="match status" value="1"/>
</dbReference>
<dbReference type="Pfam" id="PF00999">
    <property type="entry name" value="Na_H_Exchanger"/>
    <property type="match status" value="1"/>
</dbReference>
<dbReference type="Pfam" id="PF02254">
    <property type="entry name" value="TrkA_N"/>
    <property type="match status" value="1"/>
</dbReference>
<dbReference type="SUPFAM" id="SSF51735">
    <property type="entry name" value="NAD(P)-binding Rossmann-fold domains"/>
    <property type="match status" value="1"/>
</dbReference>
<dbReference type="PROSITE" id="PS51201">
    <property type="entry name" value="RCK_N"/>
    <property type="match status" value="1"/>
</dbReference>
<reference key="1">
    <citation type="submission" date="2008-02" db="EMBL/GenBank/DDBJ databases">
        <title>Complete sequence of Escherichia coli C str. ATCC 8739.</title>
        <authorList>
            <person name="Copeland A."/>
            <person name="Lucas S."/>
            <person name="Lapidus A."/>
            <person name="Glavina del Rio T."/>
            <person name="Dalin E."/>
            <person name="Tice H."/>
            <person name="Bruce D."/>
            <person name="Goodwin L."/>
            <person name="Pitluck S."/>
            <person name="Kiss H."/>
            <person name="Brettin T."/>
            <person name="Detter J.C."/>
            <person name="Han C."/>
            <person name="Kuske C.R."/>
            <person name="Schmutz J."/>
            <person name="Larimer F."/>
            <person name="Land M."/>
            <person name="Hauser L."/>
            <person name="Kyrpides N."/>
            <person name="Mikhailova N."/>
            <person name="Ingram L."/>
            <person name="Richardson P."/>
        </authorList>
    </citation>
    <scope>NUCLEOTIDE SEQUENCE [LARGE SCALE GENOMIC DNA]</scope>
    <source>
        <strain>ATCC 8739 / DSM 1576 / NBRC 3972 / NCIMB 8545 / WDCM 00012 / Crooks</strain>
    </source>
</reference>
<protein>
    <recommendedName>
        <fullName evidence="1">Glutathione-regulated potassium-efflux system protein KefB</fullName>
    </recommendedName>
    <alternativeName>
        <fullName evidence="1">K(+)/H(+) antiporter</fullName>
    </alternativeName>
</protein>
<keyword id="KW-0050">Antiport</keyword>
<keyword id="KW-0997">Cell inner membrane</keyword>
<keyword id="KW-1003">Cell membrane</keyword>
<keyword id="KW-0406">Ion transport</keyword>
<keyword id="KW-0472">Membrane</keyword>
<keyword id="KW-0630">Potassium</keyword>
<keyword id="KW-0633">Potassium transport</keyword>
<keyword id="KW-0812">Transmembrane</keyword>
<keyword id="KW-1133">Transmembrane helix</keyword>
<keyword id="KW-0813">Transport</keyword>